<sequence>MEKEVATDPLPQEIPSDAPDEGGSLSRPAANTWTVVSLTIALCLGVFCMSLDVTIITTAIPRITDQFDSLDDIGWYGSSYLLTNCATTLAFGKFYTFYSTKWVYLSALFLFEVGSLVCGVTPTSVGLILGRCIAGLGAGGLFSGSLLIIAQTVPLHRRPVFTALLGSMYGIASVAGPPLGGALTDRVSWRWCFYINLPIGAVTAAFVLFFFHAPNSVKRRPELRKLLSELDPIGSFFFLPAIVCLLLALQWGGTQYSWKSPRIIVLFVLTGVLLLAFVAVQIRQNEKATLPPRIVQNRNIWSSAWFAITLNGAYFVFIYYLPIWFQAIKAASATKSGVMNLPSIIAVVVVSIISGMLVTIFGYYNPVMIMSSVTLSIGAGLLSTLKTDSGSGEWIGYQILMGLGVGLGMQQPFMVVQNVLPDGDVPTGTAVITFAQTLGGAIFISVGQNIFQNQFAHTMHLEDPSVNVATVLSAGTTTLRKYLPAEQLPAVLRSYNTAITQAFYVGVALASLSCIGTIALEWKSVKKPRNTTPNDHSGS</sequence>
<proteinExistence type="evidence at protein level"/>
<evidence type="ECO:0000255" key="1"/>
<evidence type="ECO:0000256" key="2">
    <source>
        <dbReference type="SAM" id="MobiDB-lite"/>
    </source>
</evidence>
<evidence type="ECO:0000269" key="3">
    <source>
    </source>
</evidence>
<evidence type="ECO:0000269" key="4">
    <source>
    </source>
</evidence>
<evidence type="ECO:0000269" key="5">
    <source>
    </source>
</evidence>
<evidence type="ECO:0000303" key="6">
    <source>
    </source>
</evidence>
<evidence type="ECO:0000305" key="7"/>
<feature type="chain" id="PRO_0000436349" description="Efflux pump roqT">
    <location>
        <begin position="1"/>
        <end position="539"/>
    </location>
</feature>
<feature type="transmembrane region" description="Helical" evidence="1">
    <location>
        <begin position="36"/>
        <end position="56"/>
    </location>
</feature>
<feature type="transmembrane region" description="Helical" evidence="1">
    <location>
        <begin position="108"/>
        <end position="128"/>
    </location>
</feature>
<feature type="transmembrane region" description="Helical" evidence="1">
    <location>
        <begin position="133"/>
        <end position="153"/>
    </location>
</feature>
<feature type="transmembrane region" description="Helical" evidence="1">
    <location>
        <begin position="160"/>
        <end position="180"/>
    </location>
</feature>
<feature type="transmembrane region" description="Helical" evidence="1">
    <location>
        <begin position="191"/>
        <end position="211"/>
    </location>
</feature>
<feature type="transmembrane region" description="Helical" evidence="1">
    <location>
        <begin position="233"/>
        <end position="253"/>
    </location>
</feature>
<feature type="transmembrane region" description="Helical" evidence="1">
    <location>
        <begin position="262"/>
        <end position="282"/>
    </location>
</feature>
<feature type="transmembrane region" description="Helical" evidence="1">
    <location>
        <begin position="305"/>
        <end position="325"/>
    </location>
</feature>
<feature type="transmembrane region" description="Helical" evidence="1">
    <location>
        <begin position="338"/>
        <end position="360"/>
    </location>
</feature>
<feature type="transmembrane region" description="Helical" evidence="1">
    <location>
        <begin position="362"/>
        <end position="384"/>
    </location>
</feature>
<feature type="transmembrane region" description="Helical" evidence="1">
    <location>
        <begin position="395"/>
        <end position="415"/>
    </location>
</feature>
<feature type="transmembrane region" description="Helical" evidence="1">
    <location>
        <begin position="502"/>
        <end position="522"/>
    </location>
</feature>
<feature type="region of interest" description="Disordered" evidence="2">
    <location>
        <begin position="1"/>
        <end position="25"/>
    </location>
</feature>
<gene>
    <name evidence="6" type="primary">roqT</name>
    <name type="ORF">Pc21g15420</name>
</gene>
<reference key="1">
    <citation type="journal article" date="2008" name="Nat. Biotechnol.">
        <title>Genome sequencing and analysis of the filamentous fungus Penicillium chrysogenum.</title>
        <authorList>
            <person name="van den Berg M.A."/>
            <person name="Albang R."/>
            <person name="Albermann K."/>
            <person name="Badger J.H."/>
            <person name="Daran J.-M."/>
            <person name="Driessen A.J.M."/>
            <person name="Garcia-Estrada C."/>
            <person name="Fedorova N.D."/>
            <person name="Harris D.M."/>
            <person name="Heijne W.H.M."/>
            <person name="Joardar V.S."/>
            <person name="Kiel J.A.K.W."/>
            <person name="Kovalchuk A."/>
            <person name="Martin J.F."/>
            <person name="Nierman W.C."/>
            <person name="Nijland J.G."/>
            <person name="Pronk J.T."/>
            <person name="Roubos J.A."/>
            <person name="van der Klei I.J."/>
            <person name="van Peij N.N.M.E."/>
            <person name="Veenhuis M."/>
            <person name="von Doehren H."/>
            <person name="Wagner C."/>
            <person name="Wortman J.R."/>
            <person name="Bovenberg R.A.L."/>
        </authorList>
    </citation>
    <scope>NUCLEOTIDE SEQUENCE [LARGE SCALE GENOMIC DNA]</scope>
    <source>
        <strain>ATCC 28089 / DSM 1075 / NRRL 1951 / Wisconsin 54-1255</strain>
    </source>
</reference>
<reference key="2">
    <citation type="journal article" date="2011" name="Chem. Biol.">
        <title>A single cluster of coregulated genes encodes the biosynthesis of the mycotoxins roquefortine C and meleagrin in Penicillium chrysogenum.</title>
        <authorList>
            <person name="Garcia-Estrada C."/>
            <person name="Ullan R.V."/>
            <person name="Albillos S.M."/>
            <person name="Fernandez-Bodega M.A."/>
            <person name="Durek P."/>
            <person name="von Doehren H."/>
            <person name="Martin J.F."/>
        </authorList>
    </citation>
    <scope>FUNCTION</scope>
</reference>
<reference key="3">
    <citation type="journal article" date="2013" name="PLoS ONE">
        <title>A branched biosynthetic pathway is involved in production of roquefortine and related compounds in Penicillium chrysogenum.</title>
        <authorList>
            <person name="Ali H."/>
            <person name="Ries M.I."/>
            <person name="Nijland J.G."/>
            <person name="Lankhorst P.P."/>
            <person name="Hankemeier T."/>
            <person name="Bovenberg R.A."/>
            <person name="Vreeken R.J."/>
            <person name="Driessen A.J."/>
        </authorList>
    </citation>
    <scope>FUNCTION</scope>
    <scope>INDUCTION</scope>
    <scope>DISRUPTION PHENOTYPE</scope>
</reference>
<reference key="4">
    <citation type="journal article" date="2016" name="Bioorg. Med. Chem.">
        <title>The indole alkaloid meleagrin, from the olive tree endophytic fungus Penicillium chrysogenum, as a novel lead for the control of c-Met-dependent breast cancer proliferation, migration and invasion.</title>
        <authorList>
            <person name="Mady M.S."/>
            <person name="Mohyeldin M.M."/>
            <person name="Ebrahim H.Y."/>
            <person name="Elsayed H.E."/>
            <person name="Houssen W.E."/>
            <person name="Haggag E.G."/>
            <person name="Soliman R.F."/>
            <person name="El Sayed K.A."/>
        </authorList>
    </citation>
    <scope>BIOTECHNOLOGY</scope>
</reference>
<organism>
    <name type="scientific">Penicillium rubens (strain ATCC 28089 / DSM 1075 / NRRL 1951 / Wisconsin 54-1255)</name>
    <name type="common">Penicillium chrysogenum</name>
    <dbReference type="NCBI Taxonomy" id="500485"/>
    <lineage>
        <taxon>Eukaryota</taxon>
        <taxon>Fungi</taxon>
        <taxon>Dikarya</taxon>
        <taxon>Ascomycota</taxon>
        <taxon>Pezizomycotina</taxon>
        <taxon>Eurotiomycetes</taxon>
        <taxon>Eurotiomycetidae</taxon>
        <taxon>Eurotiales</taxon>
        <taxon>Aspergillaceae</taxon>
        <taxon>Penicillium</taxon>
        <taxon>Penicillium chrysogenum species complex</taxon>
    </lineage>
</organism>
<dbReference type="EMBL" id="AM920436">
    <property type="protein sequence ID" value="CAP96439.1"/>
    <property type="molecule type" value="Genomic_DNA"/>
</dbReference>
<dbReference type="RefSeq" id="XP_002568552.1">
    <property type="nucleotide sequence ID" value="XM_002568506.1"/>
</dbReference>
<dbReference type="SMR" id="B6HJU0"/>
<dbReference type="GeneID" id="8315543"/>
<dbReference type="KEGG" id="pcs:N7525_008081"/>
<dbReference type="VEuPathDB" id="FungiDB:PCH_Pc21g15420"/>
<dbReference type="eggNOG" id="KOG0254">
    <property type="taxonomic scope" value="Eukaryota"/>
</dbReference>
<dbReference type="HOGENOM" id="CLU_000960_22_1_1"/>
<dbReference type="OMA" id="YNTAITQ"/>
<dbReference type="OrthoDB" id="10021397at2759"/>
<dbReference type="BioCyc" id="PCHR:PC21G15420-MONOMER"/>
<dbReference type="Proteomes" id="UP000000724">
    <property type="component" value="Contig Pc00c21"/>
</dbReference>
<dbReference type="GO" id="GO:0005886">
    <property type="term" value="C:plasma membrane"/>
    <property type="evidence" value="ECO:0007669"/>
    <property type="project" value="TreeGrafter"/>
</dbReference>
<dbReference type="GO" id="GO:0022857">
    <property type="term" value="F:transmembrane transporter activity"/>
    <property type="evidence" value="ECO:0007669"/>
    <property type="project" value="InterPro"/>
</dbReference>
<dbReference type="CDD" id="cd17502">
    <property type="entry name" value="MFS_Azr1_MDR_like"/>
    <property type="match status" value="1"/>
</dbReference>
<dbReference type="FunFam" id="1.20.1250.20:FF:000196">
    <property type="entry name" value="MFS toxin efflux pump (AflT)"/>
    <property type="match status" value="1"/>
</dbReference>
<dbReference type="FunFam" id="1.20.1720.10:FF:000012">
    <property type="entry name" value="MFS toxin efflux pump (AflT)"/>
    <property type="match status" value="1"/>
</dbReference>
<dbReference type="Gene3D" id="1.20.1250.20">
    <property type="entry name" value="MFS general substrate transporter like domains"/>
    <property type="match status" value="1"/>
</dbReference>
<dbReference type="Gene3D" id="1.20.1720.10">
    <property type="entry name" value="Multidrug resistance protein D"/>
    <property type="match status" value="1"/>
</dbReference>
<dbReference type="InterPro" id="IPR011701">
    <property type="entry name" value="MFS"/>
</dbReference>
<dbReference type="InterPro" id="IPR020846">
    <property type="entry name" value="MFS_dom"/>
</dbReference>
<dbReference type="InterPro" id="IPR036259">
    <property type="entry name" value="MFS_trans_sf"/>
</dbReference>
<dbReference type="InterPro" id="IPR005829">
    <property type="entry name" value="Sugar_transporter_CS"/>
</dbReference>
<dbReference type="PANTHER" id="PTHR23501">
    <property type="entry name" value="MAJOR FACILITATOR SUPERFAMILY"/>
    <property type="match status" value="1"/>
</dbReference>
<dbReference type="PANTHER" id="PTHR23501:SF199">
    <property type="entry name" value="MFS EFFLUX TRANSPORTER INPD-RELATED"/>
    <property type="match status" value="1"/>
</dbReference>
<dbReference type="Pfam" id="PF07690">
    <property type="entry name" value="MFS_1"/>
    <property type="match status" value="1"/>
</dbReference>
<dbReference type="SUPFAM" id="SSF103473">
    <property type="entry name" value="MFS general substrate transporter"/>
    <property type="match status" value="1"/>
</dbReference>
<dbReference type="PROSITE" id="PS50850">
    <property type="entry name" value="MFS"/>
    <property type="match status" value="1"/>
</dbReference>
<dbReference type="PROSITE" id="PS00217">
    <property type="entry name" value="SUGAR_TRANSPORT_2"/>
    <property type="match status" value="1"/>
</dbReference>
<name>ROQT_PENRW</name>
<accession>B6HJU0</accession>
<comment type="function">
    <text evidence="3">Efflux pump; part of the gene cluster that mediates the biosynthesis of the mycotoxins roquefortine C and meleagrin (PubMed:22118684).</text>
</comment>
<comment type="subcellular location">
    <subcellularLocation>
        <location evidence="7">Membrane</location>
        <topology evidence="7">Multi-pass membrane protein</topology>
    </subcellularLocation>
</comment>
<comment type="induction">
    <text evidence="4">Expression is decreased in presence of phenylacetic acid (PAA) (PubMed:23776469).</text>
</comment>
<comment type="disruption phenotype">
    <text evidence="4">Does not affect the biosynthesis of roquefortine C and meleagrin (PubMed:23776469).</text>
</comment>
<comment type="biotechnology">
    <text evidence="5">The indole alkaloid meleagrin was shown to be a good candidate to control c-Met-dependent breast cancer proliferation, migration and invasion (PubMed:26692349).</text>
</comment>
<comment type="similarity">
    <text evidence="7">Belongs to the major facilitator superfamily. TCR/Tet family.</text>
</comment>
<keyword id="KW-0472">Membrane</keyword>
<keyword id="KW-1185">Reference proteome</keyword>
<keyword id="KW-0812">Transmembrane</keyword>
<keyword id="KW-1133">Transmembrane helix</keyword>
<protein>
    <recommendedName>
        <fullName evidence="7">Efflux pump roqT</fullName>
    </recommendedName>
    <alternativeName>
        <fullName evidence="6">Roquefortine/meleagrin synthesis protein T</fullName>
    </alternativeName>
</protein>